<accession>P16658</accession>
<accession>D6VYA5</accession>
<proteinExistence type="evidence at protein level"/>
<reference key="1">
    <citation type="journal article" date="1997" name="Cell">
        <title>The yeast tRNA splicing endonuclease: a tetrameric enzyme with two active site subunits homologous to the archaeal tRNA endonucleases.</title>
        <authorList>
            <person name="Trotta C.R."/>
            <person name="Miao F."/>
            <person name="Arn E.A."/>
            <person name="Stevens S.W."/>
            <person name="Ho C.K."/>
            <person name="Rauhut R."/>
            <person name="Abelson J.N."/>
        </authorList>
    </citation>
    <scope>NUCLEOTIDE SEQUENCE [GENOMIC DNA]</scope>
    <scope>CHARACTERIZATION</scope>
    <scope>SUBUNIT</scope>
    <scope>MUTANT SEN2-3</scope>
</reference>
<reference key="2">
    <citation type="journal article" date="1997" name="Nature">
        <title>The nucleotide sequence of Saccharomyces cerevisiae chromosome XII.</title>
        <authorList>
            <person name="Johnston M."/>
            <person name="Hillier L.W."/>
            <person name="Riles L."/>
            <person name="Albermann K."/>
            <person name="Andre B."/>
            <person name="Ansorge W."/>
            <person name="Benes V."/>
            <person name="Brueckner M."/>
            <person name="Delius H."/>
            <person name="Dubois E."/>
            <person name="Duesterhoeft A."/>
            <person name="Entian K.-D."/>
            <person name="Floeth M."/>
            <person name="Goffeau A."/>
            <person name="Hebling U."/>
            <person name="Heumann K."/>
            <person name="Heuss-Neitzel D."/>
            <person name="Hilbert H."/>
            <person name="Hilger F."/>
            <person name="Kleine K."/>
            <person name="Koetter P."/>
            <person name="Louis E.J."/>
            <person name="Messenguy F."/>
            <person name="Mewes H.-W."/>
            <person name="Miosga T."/>
            <person name="Moestl D."/>
            <person name="Mueller-Auer S."/>
            <person name="Nentwich U."/>
            <person name="Obermaier B."/>
            <person name="Piravandi E."/>
            <person name="Pohl T.M."/>
            <person name="Portetelle D."/>
            <person name="Purnelle B."/>
            <person name="Rechmann S."/>
            <person name="Rieger M."/>
            <person name="Rinke M."/>
            <person name="Rose M."/>
            <person name="Scharfe M."/>
            <person name="Scherens B."/>
            <person name="Scholler P."/>
            <person name="Schwager C."/>
            <person name="Schwarz S."/>
            <person name="Underwood A.P."/>
            <person name="Urrestarazu L.A."/>
            <person name="Vandenbol M."/>
            <person name="Verhasselt P."/>
            <person name="Vierendeels F."/>
            <person name="Voet M."/>
            <person name="Volckaert G."/>
            <person name="Voss H."/>
            <person name="Wambutt R."/>
            <person name="Wedler E."/>
            <person name="Wedler H."/>
            <person name="Zimmermann F.K."/>
            <person name="Zollner A."/>
            <person name="Hani J."/>
            <person name="Hoheisel J.D."/>
        </authorList>
    </citation>
    <scope>NUCLEOTIDE SEQUENCE [LARGE SCALE GENOMIC DNA]</scope>
    <source>
        <strain>ATCC 204508 / S288c</strain>
    </source>
</reference>
<reference key="3">
    <citation type="journal article" date="2014" name="G3 (Bethesda)">
        <title>The reference genome sequence of Saccharomyces cerevisiae: Then and now.</title>
        <authorList>
            <person name="Engel S.R."/>
            <person name="Dietrich F.S."/>
            <person name="Fisk D.G."/>
            <person name="Binkley G."/>
            <person name="Balakrishnan R."/>
            <person name="Costanzo M.C."/>
            <person name="Dwight S.S."/>
            <person name="Hitz B.C."/>
            <person name="Karra K."/>
            <person name="Nash R.S."/>
            <person name="Weng S."/>
            <person name="Wong E.D."/>
            <person name="Lloyd P."/>
            <person name="Skrzypek M.S."/>
            <person name="Miyasato S.R."/>
            <person name="Simison M."/>
            <person name="Cherry J.M."/>
        </authorList>
    </citation>
    <scope>GENOME REANNOTATION</scope>
    <source>
        <strain>ATCC 204508 / S288c</strain>
    </source>
</reference>
<reference key="4">
    <citation type="journal article" date="1990" name="J. Biol. Chem.">
        <title>Yeast tRNA-splicing endonuclease is a heterotrimeric enzyme.</title>
        <authorList>
            <person name="Rauhut R."/>
            <person name="Green P.R."/>
            <person name="Abelson J.N."/>
        </authorList>
    </citation>
    <scope>SUBUNIT</scope>
</reference>
<reference key="5">
    <citation type="journal article" date="1990" name="EMBO J.">
        <title>Accumulation of pre-tRNA splicing '2/3' intermediates in a Saccharomyces cerevisiae mutant.</title>
        <authorList>
            <person name="Ho C.K."/>
            <person name="Rauhut R."/>
            <person name="Vijayraghavan U."/>
            <person name="Abelson J."/>
        </authorList>
    </citation>
    <scope>FUNCTION</scope>
</reference>
<reference key="6">
    <citation type="journal article" date="2003" name="Mol. Biol. Cell">
        <title>Possibility of cytoplasmic pre-tRNA splicing: the yeast tRNA splicing endonuclease mainly localizes on the mitochondria.</title>
        <authorList>
            <person name="Yoshihisa T."/>
            <person name="Yunoki-Esaki K."/>
            <person name="Ohshima C."/>
            <person name="Tanaka N."/>
            <person name="Endo T."/>
        </authorList>
    </citation>
    <scope>SUBCELLULAR LOCATION</scope>
</reference>
<reference key="7">
    <citation type="journal article" date="2003" name="Nature">
        <title>Global analysis of protein expression in yeast.</title>
        <authorList>
            <person name="Ghaemmaghami S."/>
            <person name="Huh W.-K."/>
            <person name="Bower K."/>
            <person name="Howson R.W."/>
            <person name="Belle A."/>
            <person name="Dephoure N."/>
            <person name="O'Shea E.K."/>
            <person name="Weissman J.S."/>
        </authorList>
    </citation>
    <scope>LEVEL OF PROTEIN EXPRESSION [LARGE SCALE ANALYSIS]</scope>
</reference>
<reference key="8">
    <citation type="journal article" date="2006" name="J. Proteome Res.">
        <title>Toward the complete yeast mitochondrial proteome: multidimensional separation techniques for mitochondrial proteomics.</title>
        <authorList>
            <person name="Reinders J."/>
            <person name="Zahedi R.P."/>
            <person name="Pfanner N."/>
            <person name="Meisinger C."/>
            <person name="Sickmann A."/>
        </authorList>
    </citation>
    <scope>SUBCELLULAR LOCATION [LARGE SCALE ANALYSIS]</scope>
    <scope>IDENTIFICATION BY MASS SPECTROMETRY</scope>
</reference>
<gene>
    <name type="primary">SEN2</name>
    <name type="ordered locus">YLR105C</name>
    <name type="ORF">L8004.12</name>
</gene>
<evidence type="ECO:0000250" key="1"/>
<evidence type="ECO:0000255" key="2"/>
<evidence type="ECO:0000269" key="3">
    <source>
    </source>
</evidence>
<evidence type="ECO:0000269" key="4">
    <source>
    </source>
</evidence>
<evidence type="ECO:0000269" key="5">
    <source>
    </source>
</evidence>
<evidence type="ECO:0000269" key="6">
    <source>
    </source>
</evidence>
<evidence type="ECO:0000269" key="7">
    <source>
    </source>
</evidence>
<evidence type="ECO:0000269" key="8">
    <source>
    </source>
</evidence>
<evidence type="ECO:0000305" key="9"/>
<name>SEN2_YEAST</name>
<feature type="chain" id="PRO_0000109462" description="tRNA-splicing endonuclease subunit SEN2">
    <location>
        <begin position="1"/>
        <end position="377"/>
    </location>
</feature>
<feature type="coiled-coil region" evidence="2">
    <location>
        <begin position="119"/>
        <end position="174"/>
    </location>
</feature>
<feature type="active site" evidence="1">
    <location>
        <position position="289"/>
    </location>
</feature>
<feature type="active site" evidence="1">
    <location>
        <position position="297"/>
    </location>
</feature>
<feature type="active site" evidence="1">
    <location>
        <position position="328"/>
    </location>
</feature>
<feature type="sequence variant" description="In the cold-sensitive allele sen2-3; defective in cleavage only at the 5'-splice site of tRNA precursors.">
    <original>G</original>
    <variation>E</variation>
    <location>
        <position position="292"/>
    </location>
</feature>
<protein>
    <recommendedName>
        <fullName>tRNA-splicing endonuclease subunit SEN2</fullName>
        <ecNumber>4.6.1.16</ecNumber>
    </recommendedName>
    <alternativeName>
        <fullName>Splicing endonuclease protein 2</fullName>
    </alternativeName>
    <alternativeName>
        <fullName>tRNA-intron endonuclease SEN2</fullName>
    </alternativeName>
</protein>
<dbReference type="EC" id="4.6.1.16"/>
<dbReference type="EMBL" id="M32336">
    <property type="protein sequence ID" value="AAB65811.1"/>
    <property type="molecule type" value="Genomic_DNA"/>
</dbReference>
<dbReference type="EMBL" id="Z73277">
    <property type="protein sequence ID" value="CAA97670.1"/>
    <property type="molecule type" value="Genomic_DNA"/>
</dbReference>
<dbReference type="EMBL" id="U53876">
    <property type="protein sequence ID" value="AAB67547.1"/>
    <property type="molecule type" value="Genomic_DNA"/>
</dbReference>
<dbReference type="EMBL" id="BK006945">
    <property type="protein sequence ID" value="DAA09421.1"/>
    <property type="molecule type" value="Genomic_DNA"/>
</dbReference>
<dbReference type="PIR" id="A38862">
    <property type="entry name" value="A38862"/>
</dbReference>
<dbReference type="RefSeq" id="NP_013206.1">
    <property type="nucleotide sequence ID" value="NM_001181992.1"/>
</dbReference>
<dbReference type="SMR" id="P16658"/>
<dbReference type="BioGRID" id="31378">
    <property type="interactions" value="82"/>
</dbReference>
<dbReference type="ComplexPortal" id="CPX-1832">
    <property type="entry name" value="tRNA-intron endonuclease complex"/>
</dbReference>
<dbReference type="DIP" id="DIP-4821N"/>
<dbReference type="FunCoup" id="P16658">
    <property type="interactions" value="96"/>
</dbReference>
<dbReference type="IntAct" id="P16658">
    <property type="interactions" value="7"/>
</dbReference>
<dbReference type="MINT" id="P16658"/>
<dbReference type="STRING" id="4932.YLR105C"/>
<dbReference type="iPTMnet" id="P16658"/>
<dbReference type="PaxDb" id="4932-YLR105C"/>
<dbReference type="PeptideAtlas" id="P16658"/>
<dbReference type="EnsemblFungi" id="YLR105C_mRNA">
    <property type="protein sequence ID" value="YLR105C"/>
    <property type="gene ID" value="YLR105C"/>
</dbReference>
<dbReference type="GeneID" id="850795"/>
<dbReference type="KEGG" id="sce:YLR105C"/>
<dbReference type="AGR" id="SGD:S000004095"/>
<dbReference type="SGD" id="S000004095">
    <property type="gene designation" value="SEN2"/>
</dbReference>
<dbReference type="VEuPathDB" id="FungiDB:YLR105C"/>
<dbReference type="eggNOG" id="KOG4685">
    <property type="taxonomic scope" value="Eukaryota"/>
</dbReference>
<dbReference type="GeneTree" id="ENSGT00390000013266"/>
<dbReference type="HOGENOM" id="CLU_012847_2_0_1"/>
<dbReference type="InParanoid" id="P16658"/>
<dbReference type="OMA" id="AFYPNNP"/>
<dbReference type="OrthoDB" id="10249562at2759"/>
<dbReference type="BioCyc" id="MetaCyc:G3O-32253-MONOMER"/>
<dbReference type="BioCyc" id="YEAST:G3O-32253-MONOMER"/>
<dbReference type="BRENDA" id="4.6.1.16">
    <property type="organism ID" value="984"/>
</dbReference>
<dbReference type="BioGRID-ORCS" id="850795">
    <property type="hits" value="0 hits in 10 CRISPR screens"/>
</dbReference>
<dbReference type="PRO" id="PR:P16658"/>
<dbReference type="Proteomes" id="UP000002311">
    <property type="component" value="Chromosome XII"/>
</dbReference>
<dbReference type="RNAct" id="P16658">
    <property type="molecule type" value="protein"/>
</dbReference>
<dbReference type="GO" id="GO:0005737">
    <property type="term" value="C:cytoplasm"/>
    <property type="evidence" value="ECO:0000318"/>
    <property type="project" value="GO_Central"/>
</dbReference>
<dbReference type="GO" id="GO:0012505">
    <property type="term" value="C:endomembrane system"/>
    <property type="evidence" value="ECO:0007669"/>
    <property type="project" value="UniProtKB-SubCell"/>
</dbReference>
<dbReference type="GO" id="GO:0005741">
    <property type="term" value="C:mitochondrial outer membrane"/>
    <property type="evidence" value="ECO:0000314"/>
    <property type="project" value="SGD"/>
</dbReference>
<dbReference type="GO" id="GO:0005739">
    <property type="term" value="C:mitochondrion"/>
    <property type="evidence" value="ECO:0007005"/>
    <property type="project" value="SGD"/>
</dbReference>
<dbReference type="GO" id="GO:0005777">
    <property type="term" value="C:peroxisome"/>
    <property type="evidence" value="ECO:0007005"/>
    <property type="project" value="SGD"/>
</dbReference>
<dbReference type="GO" id="GO:0000214">
    <property type="term" value="C:tRNA-intron endonuclease complex"/>
    <property type="evidence" value="ECO:0000314"/>
    <property type="project" value="SGD"/>
</dbReference>
<dbReference type="GO" id="GO:0016829">
    <property type="term" value="F:lyase activity"/>
    <property type="evidence" value="ECO:0007669"/>
    <property type="project" value="UniProtKB-KW"/>
</dbReference>
<dbReference type="GO" id="GO:0003676">
    <property type="term" value="F:nucleic acid binding"/>
    <property type="evidence" value="ECO:0007669"/>
    <property type="project" value="InterPro"/>
</dbReference>
<dbReference type="GO" id="GO:0000213">
    <property type="term" value="F:tRNA-intron endonuclease activity"/>
    <property type="evidence" value="ECO:0000314"/>
    <property type="project" value="SGD"/>
</dbReference>
<dbReference type="GO" id="GO:0008033">
    <property type="term" value="P:tRNA processing"/>
    <property type="evidence" value="ECO:0000318"/>
    <property type="project" value="GO_Central"/>
</dbReference>
<dbReference type="GO" id="GO:0000379">
    <property type="term" value="P:tRNA-type intron splice site recognition and cleavage"/>
    <property type="evidence" value="ECO:0000314"/>
    <property type="project" value="ComplexPortal"/>
</dbReference>
<dbReference type="CDD" id="cd22363">
    <property type="entry name" value="tRNA-intron_lyase_C"/>
    <property type="match status" value="1"/>
</dbReference>
<dbReference type="FunFam" id="3.40.1350.10:FF:000011">
    <property type="entry name" value="tRNA-splicing endonuclease subunit Sen2"/>
    <property type="match status" value="1"/>
</dbReference>
<dbReference type="Gene3D" id="3.40.1350.10">
    <property type="match status" value="1"/>
</dbReference>
<dbReference type="InterPro" id="IPR011856">
    <property type="entry name" value="tRNA_endonuc-like_dom_sf"/>
</dbReference>
<dbReference type="InterPro" id="IPR036167">
    <property type="entry name" value="tRNA_intron_Endo_cat-like_sf"/>
</dbReference>
<dbReference type="InterPro" id="IPR006677">
    <property type="entry name" value="tRNA_intron_Endonuc_cat-like"/>
</dbReference>
<dbReference type="InterPro" id="IPR006676">
    <property type="entry name" value="tRNA_splic"/>
</dbReference>
<dbReference type="InterPro" id="IPR016589">
    <property type="entry name" value="tRNA_splic_SEN2"/>
</dbReference>
<dbReference type="NCBIfam" id="TIGR00324">
    <property type="entry name" value="endA"/>
    <property type="match status" value="1"/>
</dbReference>
<dbReference type="PANTHER" id="PTHR21227">
    <property type="entry name" value="TRNA-SPLICING ENDONUCLEASE SUBUNIT SEN2"/>
    <property type="match status" value="1"/>
</dbReference>
<dbReference type="PANTHER" id="PTHR21227:SF0">
    <property type="entry name" value="TRNA-SPLICING ENDONUCLEASE SUBUNIT SEN2"/>
    <property type="match status" value="1"/>
</dbReference>
<dbReference type="Pfam" id="PF01974">
    <property type="entry name" value="tRNA_int_endo"/>
    <property type="match status" value="1"/>
</dbReference>
<dbReference type="PIRSF" id="PIRSF011789">
    <property type="entry name" value="tRNA_splic_SEN2"/>
    <property type="match status" value="1"/>
</dbReference>
<dbReference type="SUPFAM" id="SSF53032">
    <property type="entry name" value="tRNA-intron endonuclease catalytic domain-like"/>
    <property type="match status" value="1"/>
</dbReference>
<organism>
    <name type="scientific">Saccharomyces cerevisiae (strain ATCC 204508 / S288c)</name>
    <name type="common">Baker's yeast</name>
    <dbReference type="NCBI Taxonomy" id="559292"/>
    <lineage>
        <taxon>Eukaryota</taxon>
        <taxon>Fungi</taxon>
        <taxon>Dikarya</taxon>
        <taxon>Ascomycota</taxon>
        <taxon>Saccharomycotina</taxon>
        <taxon>Saccharomycetes</taxon>
        <taxon>Saccharomycetales</taxon>
        <taxon>Saccharomycetaceae</taxon>
        <taxon>Saccharomyces</taxon>
    </lineage>
</organism>
<keyword id="KW-0175">Coiled coil</keyword>
<keyword id="KW-0456">Lyase</keyword>
<keyword id="KW-0472">Membrane</keyword>
<keyword id="KW-0496">Mitochondrion</keyword>
<keyword id="KW-1000">Mitochondrion outer membrane</keyword>
<keyword id="KW-0539">Nucleus</keyword>
<keyword id="KW-1185">Reference proteome</keyword>
<keyword id="KW-0819">tRNA processing</keyword>
<sequence>MSKGRVNQKRYKYPLPIHPVDDLPELILHNPLSWLYWAYRYYKSTNALNDKVHVDFIGDTTLHITVQDDKQMLYLWNNGFFGTGQFSRSEPTWKARTEARLGLNDTPLHNRGGTKSNTETEMTLEKVTQQRRLQRLEFKKERAKLERELLELRKKGGHIDEENILLEKQRESLRKFKLKQTEDVGIVAQQQDISESNLRDEDNNLLDENGDLLPLESLELMPVEAMFLTFALPVLDISPACLAGKLFQFDAKYKDIHSFVRSYVIYHHYRSHGWCVRSGIKFGCDYLLYKRGPPFQHAEFCVMGLDHDVSKDYTWYSSIARVVGGAKKTFVLCYVERLISEQEAIALWKSNNFTKLFNSFQVGEVLYKRWVPGRNRD</sequence>
<comment type="function">
    <text evidence="6">Constitutes one of the two catalytic subunit of the tRNA-splicing endonuclease complex, a complex responsible for identification and cleavage of the splice sites in pre-tRNA. It cleaves pre-tRNA at the 5'- and 3'-splice sites to release the intron. The products are an intron and two tRNA half-molecules bearing 2',3'-cyclic phosphate and 5'-OH termini. There are no conserved sequences at the splice sites, but the intron is invariably located at the same site in the gene, placing the splice sites an invariant distance from the constant structural features of the tRNA body. This subunit may anchor the endonuclease complex to the nuclear membrane. Probably carries the active site for 5'-splice site cleavage.</text>
</comment>
<comment type="catalytic activity">
    <reaction>
        <text>pretRNA = a 3'-half-tRNA molecule with a 5'-OH end + a 5'-half-tRNA molecule with a 2',3'-cyclic phosphate end + an intron with a 2',3'-cyclic phosphate and a 5'-hydroxyl terminus.</text>
        <dbReference type="EC" id="4.6.1.16"/>
    </reaction>
</comment>
<comment type="subunit">
    <text evidence="7 8">Heterotetramer composed of SEN2, SEN15, SEN34 and SEN54. Interacts directly with SEN54.</text>
</comment>
<comment type="interaction">
    <interactant intactId="EBI-16953">
        <id>P16658</id>
    </interactant>
    <interactant intactId="EBI-16829">
        <id>Q02825</id>
        <label>SEN54</label>
    </interactant>
    <organismsDiffer>false</organismsDiffer>
    <experiments>5</experiments>
</comment>
<comment type="subcellular location">
    <subcellularLocation>
        <location evidence="3">Nucleus</location>
    </subcellularLocation>
    <subcellularLocation>
        <location evidence="3">Endomembrane system</location>
        <topology evidence="3">Peripheral membrane protein</topology>
    </subcellularLocation>
    <subcellularLocation>
        <location evidence="3 5">Mitochondrion outer membrane</location>
        <topology evidence="3 5">Peripheral membrane protein</topology>
        <orientation evidence="3 5">Cytoplasmic side</orientation>
    </subcellularLocation>
    <text>The tRNA splicing endonuclease complex is predominantly associated with the outer membrane of mitochondria, suggesting that tRNA splicing mainly takes place on the mitochondrial surface.</text>
</comment>
<comment type="miscellaneous">
    <text evidence="4">The tRNA splicing endonuclease complex is present with 100 molecules/cell.</text>
</comment>
<comment type="miscellaneous">
    <text evidence="4">Present with 319 molecules/cell in log phase SD medium.</text>
</comment>
<comment type="similarity">
    <text evidence="9">Belongs to the tRNA-intron endonuclease family.</text>
</comment>
<comment type="caution">
    <text evidence="9">According to PubMed:9200603, it contains a transmembrane domain and may be responsible to anchor the complex into membranes, however, PubMed:12925762 showed that it is peripherically associated with membranes, and is probably not a transmembrane protein.</text>
</comment>